<organism>
    <name type="scientific">Mus musculus</name>
    <name type="common">Mouse</name>
    <dbReference type="NCBI Taxonomy" id="10090"/>
    <lineage>
        <taxon>Eukaryota</taxon>
        <taxon>Metazoa</taxon>
        <taxon>Chordata</taxon>
        <taxon>Craniata</taxon>
        <taxon>Vertebrata</taxon>
        <taxon>Euteleostomi</taxon>
        <taxon>Mammalia</taxon>
        <taxon>Eutheria</taxon>
        <taxon>Euarchontoglires</taxon>
        <taxon>Glires</taxon>
        <taxon>Rodentia</taxon>
        <taxon>Myomorpha</taxon>
        <taxon>Muroidea</taxon>
        <taxon>Muridae</taxon>
        <taxon>Murinae</taxon>
        <taxon>Mus</taxon>
        <taxon>Mus</taxon>
    </lineage>
</organism>
<comment type="function">
    <text evidence="2">IGF-binding proteins prolong the half-life of the IGFs and have been shown to either inhibit or stimulate the growth promoting effects of the IGFs on cell culture. They alter the interaction of IGFs with their cell surface receptors. Activates the MAPK signaling pathway and induces cell migration.</text>
</comment>
<comment type="subunit">
    <text evidence="2">Interacts (via C-terminal domain) with PHB2.</text>
</comment>
<comment type="subcellular location">
    <subcellularLocation>
        <location>Secreted</location>
    </subcellularLocation>
</comment>
<comment type="PTM">
    <text>O-glycosylated.</text>
</comment>
<name>IBP6_MOUSE</name>
<accession>P47880</accession>
<accession>Q91X24</accession>
<protein>
    <recommendedName>
        <fullName>Insulin-like growth factor-binding protein 6</fullName>
        <shortName>IBP-6</shortName>
        <shortName>IGF-binding protein 6</shortName>
        <shortName>IGFBP-6</shortName>
    </recommendedName>
</protein>
<evidence type="ECO:0000250" key="1"/>
<evidence type="ECO:0000250" key="2">
    <source>
        <dbReference type="UniProtKB" id="P24592"/>
    </source>
</evidence>
<evidence type="ECO:0000255" key="3">
    <source>
        <dbReference type="PROSITE-ProRule" id="PRU00500"/>
    </source>
</evidence>
<evidence type="ECO:0000255" key="4">
    <source>
        <dbReference type="PROSITE-ProRule" id="PRU00653"/>
    </source>
</evidence>
<evidence type="ECO:0000256" key="5">
    <source>
        <dbReference type="SAM" id="MobiDB-lite"/>
    </source>
</evidence>
<evidence type="ECO:0000305" key="6"/>
<keyword id="KW-1015">Disulfide bond</keyword>
<keyword id="KW-0325">Glycoprotein</keyword>
<keyword id="KW-0340">Growth factor binding</keyword>
<keyword id="KW-1185">Reference proteome</keyword>
<keyword id="KW-0964">Secreted</keyword>
<keyword id="KW-0732">Signal</keyword>
<proteinExistence type="evidence at transcript level"/>
<dbReference type="EMBL" id="X81584">
    <property type="protein sequence ID" value="CAA57274.1"/>
    <property type="molecule type" value="mRNA"/>
</dbReference>
<dbReference type="EMBL" id="AC110512">
    <property type="status" value="NOT_ANNOTATED_CDS"/>
    <property type="molecule type" value="Genomic_DNA"/>
</dbReference>
<dbReference type="EMBL" id="AC123791">
    <property type="status" value="NOT_ANNOTATED_CDS"/>
    <property type="molecule type" value="Genomic_DNA"/>
</dbReference>
<dbReference type="EMBL" id="BC012723">
    <property type="protein sequence ID" value="AAH12723.1"/>
    <property type="molecule type" value="mRNA"/>
</dbReference>
<dbReference type="EMBL" id="CH466550">
    <property type="protein sequence ID" value="EDL04005.1"/>
    <property type="molecule type" value="Genomic_DNA"/>
</dbReference>
<dbReference type="CCDS" id="CCDS27871.1"/>
<dbReference type="PIR" id="I48605">
    <property type="entry name" value="I48605"/>
</dbReference>
<dbReference type="RefSeq" id="NP_032370.2">
    <property type="nucleotide sequence ID" value="NM_008344.3"/>
</dbReference>
<dbReference type="SMR" id="P47880"/>
<dbReference type="DIP" id="DIP-60634N"/>
<dbReference type="FunCoup" id="P47880">
    <property type="interactions" value="86"/>
</dbReference>
<dbReference type="IntAct" id="P47880">
    <property type="interactions" value="2"/>
</dbReference>
<dbReference type="STRING" id="10090.ENSMUSP00000023807"/>
<dbReference type="MEROPS" id="I31.952"/>
<dbReference type="GlyGen" id="P47880">
    <property type="glycosylation" value="1 site"/>
</dbReference>
<dbReference type="PhosphoSitePlus" id="P47880"/>
<dbReference type="CPTAC" id="non-CPTAC-3582"/>
<dbReference type="PaxDb" id="10090-ENSMUSP00000023807"/>
<dbReference type="PeptideAtlas" id="P47880"/>
<dbReference type="ProteomicsDB" id="267184"/>
<dbReference type="Pumba" id="P47880"/>
<dbReference type="Antibodypedia" id="1291">
    <property type="antibodies" value="366 antibodies from 34 providers"/>
</dbReference>
<dbReference type="DNASU" id="16012"/>
<dbReference type="Ensembl" id="ENSMUST00000023807.7">
    <property type="protein sequence ID" value="ENSMUSP00000023807.7"/>
    <property type="gene ID" value="ENSMUSG00000023046.7"/>
</dbReference>
<dbReference type="GeneID" id="16012"/>
<dbReference type="KEGG" id="mmu:16012"/>
<dbReference type="UCSC" id="uc011zzz.1">
    <property type="organism name" value="mouse"/>
</dbReference>
<dbReference type="AGR" id="MGI:96441"/>
<dbReference type="CTD" id="3489"/>
<dbReference type="MGI" id="MGI:96441">
    <property type="gene designation" value="Igfbp6"/>
</dbReference>
<dbReference type="VEuPathDB" id="HostDB:ENSMUSG00000023046"/>
<dbReference type="eggNOG" id="ENOG502QV3Q">
    <property type="taxonomic scope" value="Eukaryota"/>
</dbReference>
<dbReference type="GeneTree" id="ENSGT00940000160528"/>
<dbReference type="HOGENOM" id="CLU_070833_1_0_1"/>
<dbReference type="InParanoid" id="P47880"/>
<dbReference type="OMA" id="CVDELGA"/>
<dbReference type="OrthoDB" id="8875634at2759"/>
<dbReference type="PhylomeDB" id="P47880"/>
<dbReference type="TreeFam" id="TF331211"/>
<dbReference type="Reactome" id="R-MMU-381426">
    <property type="pathway name" value="Regulation of Insulin-like Growth Factor (IGF) transport and uptake by Insulin-like Growth Factor Binding Proteins (IGFBPs)"/>
</dbReference>
<dbReference type="BioGRID-ORCS" id="16012">
    <property type="hits" value="2 hits in 76 CRISPR screens"/>
</dbReference>
<dbReference type="PRO" id="PR:P47880"/>
<dbReference type="Proteomes" id="UP000000589">
    <property type="component" value="Chromosome 15"/>
</dbReference>
<dbReference type="RNAct" id="P47880">
    <property type="molecule type" value="protein"/>
</dbReference>
<dbReference type="Bgee" id="ENSMUSG00000023046">
    <property type="expression patterns" value="Expressed in tarsal region and 184 other cell types or tissues"/>
</dbReference>
<dbReference type="GO" id="GO:0062023">
    <property type="term" value="C:collagen-containing extracellular matrix"/>
    <property type="evidence" value="ECO:0007005"/>
    <property type="project" value="BHF-UCL"/>
</dbReference>
<dbReference type="GO" id="GO:0005615">
    <property type="term" value="C:extracellular space"/>
    <property type="evidence" value="ECO:0007005"/>
    <property type="project" value="BHF-UCL"/>
</dbReference>
<dbReference type="GO" id="GO:0042568">
    <property type="term" value="C:insulin-like growth factor binary complex"/>
    <property type="evidence" value="ECO:0007669"/>
    <property type="project" value="Ensembl"/>
</dbReference>
<dbReference type="GO" id="GO:0042802">
    <property type="term" value="F:identical protein binding"/>
    <property type="evidence" value="ECO:0007669"/>
    <property type="project" value="Ensembl"/>
</dbReference>
<dbReference type="GO" id="GO:0031994">
    <property type="term" value="F:insulin-like growth factor I binding"/>
    <property type="evidence" value="ECO:0007669"/>
    <property type="project" value="Ensembl"/>
</dbReference>
<dbReference type="GO" id="GO:0031995">
    <property type="term" value="F:insulin-like growth factor II binding"/>
    <property type="evidence" value="ECO:0007669"/>
    <property type="project" value="Ensembl"/>
</dbReference>
<dbReference type="GO" id="GO:0016477">
    <property type="term" value="P:cell migration"/>
    <property type="evidence" value="ECO:0000250"/>
    <property type="project" value="UniProtKB"/>
</dbReference>
<dbReference type="GO" id="GO:0043410">
    <property type="term" value="P:positive regulation of MAPK cascade"/>
    <property type="evidence" value="ECO:0000250"/>
    <property type="project" value="UniProtKB"/>
</dbReference>
<dbReference type="GO" id="GO:0032874">
    <property type="term" value="P:positive regulation of stress-activated MAPK cascade"/>
    <property type="evidence" value="ECO:0007669"/>
    <property type="project" value="Ensembl"/>
</dbReference>
<dbReference type="CDD" id="cd00191">
    <property type="entry name" value="TY"/>
    <property type="match status" value="1"/>
</dbReference>
<dbReference type="FunFam" id="4.10.800.10:FF:000010">
    <property type="entry name" value="Insulin-like growth factor binding protein 6"/>
    <property type="match status" value="1"/>
</dbReference>
<dbReference type="FunFam" id="4.10.40.20:FF:000011">
    <property type="entry name" value="insulin-like growth factor-binding protein 6 isoform X1"/>
    <property type="match status" value="1"/>
</dbReference>
<dbReference type="Gene3D" id="4.10.40.20">
    <property type="match status" value="1"/>
</dbReference>
<dbReference type="Gene3D" id="4.10.800.10">
    <property type="entry name" value="Thyroglobulin type-1"/>
    <property type="match status" value="1"/>
</dbReference>
<dbReference type="InterPro" id="IPR009030">
    <property type="entry name" value="Growth_fac_rcpt_cys_sf"/>
</dbReference>
<dbReference type="InterPro" id="IPR022326">
    <property type="entry name" value="IGFBP-6"/>
</dbReference>
<dbReference type="InterPro" id="IPR000867">
    <property type="entry name" value="IGFBP-like"/>
</dbReference>
<dbReference type="InterPro" id="IPR022321">
    <property type="entry name" value="IGFBP_1-6_chordata"/>
</dbReference>
<dbReference type="InterPro" id="IPR017891">
    <property type="entry name" value="Insulin_GF-bd_Cys-rich_CS"/>
</dbReference>
<dbReference type="InterPro" id="IPR000716">
    <property type="entry name" value="Thyroglobulin_1"/>
</dbReference>
<dbReference type="InterPro" id="IPR036857">
    <property type="entry name" value="Thyroglobulin_1_sf"/>
</dbReference>
<dbReference type="PANTHER" id="PTHR11551">
    <property type="entry name" value="INSULIN-LIKE GROWTH FACTOR BINDING PROTEIN"/>
    <property type="match status" value="1"/>
</dbReference>
<dbReference type="PANTHER" id="PTHR11551:SF14">
    <property type="entry name" value="INSULIN-LIKE GROWTH FACTOR-BINDING PROTEIN 6"/>
    <property type="match status" value="1"/>
</dbReference>
<dbReference type="Pfam" id="PF00086">
    <property type="entry name" value="Thyroglobulin_1"/>
    <property type="match status" value="1"/>
</dbReference>
<dbReference type="PRINTS" id="PR01976">
    <property type="entry name" value="IGFBPFAMILY"/>
</dbReference>
<dbReference type="PRINTS" id="PR01982">
    <property type="entry name" value="IGFBPFAMILY6"/>
</dbReference>
<dbReference type="SMART" id="SM00121">
    <property type="entry name" value="IB"/>
    <property type="match status" value="1"/>
</dbReference>
<dbReference type="SMART" id="SM00211">
    <property type="entry name" value="TY"/>
    <property type="match status" value="1"/>
</dbReference>
<dbReference type="SUPFAM" id="SSF57184">
    <property type="entry name" value="Growth factor receptor domain"/>
    <property type="match status" value="1"/>
</dbReference>
<dbReference type="SUPFAM" id="SSF57610">
    <property type="entry name" value="Thyroglobulin type-1 domain"/>
    <property type="match status" value="1"/>
</dbReference>
<dbReference type="PROSITE" id="PS00222">
    <property type="entry name" value="IGFBP_N_1"/>
    <property type="match status" value="1"/>
</dbReference>
<dbReference type="PROSITE" id="PS51323">
    <property type="entry name" value="IGFBP_N_2"/>
    <property type="match status" value="1"/>
</dbReference>
<dbReference type="PROSITE" id="PS00484">
    <property type="entry name" value="THYROGLOBULIN_1_1"/>
    <property type="match status" value="1"/>
</dbReference>
<dbReference type="PROSITE" id="PS51162">
    <property type="entry name" value="THYROGLOBULIN_1_2"/>
    <property type="match status" value="1"/>
</dbReference>
<reference key="1">
    <citation type="journal article" date="1994" name="Mol. Cell. Endocrinol.">
        <title>cDNA cloning and mRNA expression of the six mouse insulin-like growth factor binding proteins.</title>
        <authorList>
            <person name="Schuller A.G.P."/>
            <person name="Groffen C."/>
            <person name="van Neck J.W."/>
            <person name="Zwarthoff E.C."/>
            <person name="Drop S.L.S."/>
        </authorList>
    </citation>
    <scope>NUCLEOTIDE SEQUENCE [MRNA]</scope>
    <source>
        <tissue>Liver</tissue>
    </source>
</reference>
<reference key="2">
    <citation type="journal article" date="2009" name="PLoS Biol.">
        <title>Lineage-specific biology revealed by a finished genome assembly of the mouse.</title>
        <authorList>
            <person name="Church D.M."/>
            <person name="Goodstadt L."/>
            <person name="Hillier L.W."/>
            <person name="Zody M.C."/>
            <person name="Goldstein S."/>
            <person name="She X."/>
            <person name="Bult C.J."/>
            <person name="Agarwala R."/>
            <person name="Cherry J.L."/>
            <person name="DiCuccio M."/>
            <person name="Hlavina W."/>
            <person name="Kapustin Y."/>
            <person name="Meric P."/>
            <person name="Maglott D."/>
            <person name="Birtle Z."/>
            <person name="Marques A.C."/>
            <person name="Graves T."/>
            <person name="Zhou S."/>
            <person name="Teague B."/>
            <person name="Potamousis K."/>
            <person name="Churas C."/>
            <person name="Place M."/>
            <person name="Herschleb J."/>
            <person name="Runnheim R."/>
            <person name="Forrest D."/>
            <person name="Amos-Landgraf J."/>
            <person name="Schwartz D.C."/>
            <person name="Cheng Z."/>
            <person name="Lindblad-Toh K."/>
            <person name="Eichler E.E."/>
            <person name="Ponting C.P."/>
        </authorList>
    </citation>
    <scope>NUCLEOTIDE SEQUENCE [LARGE SCALE GENOMIC DNA]</scope>
    <source>
        <strain>C57BL/6J</strain>
    </source>
</reference>
<reference key="3">
    <citation type="submission" date="2005-07" db="EMBL/GenBank/DDBJ databases">
        <authorList>
            <person name="Mural R.J."/>
            <person name="Adams M.D."/>
            <person name="Myers E.W."/>
            <person name="Smith H.O."/>
            <person name="Venter J.C."/>
        </authorList>
    </citation>
    <scope>NUCLEOTIDE SEQUENCE [LARGE SCALE GENOMIC DNA]</scope>
</reference>
<reference key="4">
    <citation type="journal article" date="2004" name="Genome Res.">
        <title>The status, quality, and expansion of the NIH full-length cDNA project: the Mammalian Gene Collection (MGC).</title>
        <authorList>
            <consortium name="The MGC Project Team"/>
        </authorList>
    </citation>
    <scope>NUCLEOTIDE SEQUENCE [LARGE SCALE MRNA]</scope>
    <source>
        <strain>FVB/N</strain>
        <tissue>Colon</tissue>
    </source>
</reference>
<feature type="signal peptide" evidence="1">
    <location>
        <begin position="1"/>
        <end position="25"/>
    </location>
</feature>
<feature type="chain" id="PRO_0000014390" description="Insulin-like growth factor-binding protein 6">
    <location>
        <begin position="26"/>
        <end position="238"/>
    </location>
</feature>
<feature type="domain" description="IGFBP N-terminal" evidence="4">
    <location>
        <begin position="26"/>
        <end position="108"/>
    </location>
</feature>
<feature type="domain" description="Thyroglobulin type-1" evidence="3">
    <location>
        <begin position="157"/>
        <end position="232"/>
    </location>
</feature>
<feature type="region of interest" description="Disordered" evidence="5">
    <location>
        <begin position="104"/>
        <end position="159"/>
    </location>
</feature>
<feature type="region of interest" description="Disordered" evidence="5">
    <location>
        <begin position="218"/>
        <end position="238"/>
    </location>
</feature>
<feature type="compositionally biased region" description="Basic and acidic residues" evidence="5">
    <location>
        <begin position="110"/>
        <end position="120"/>
    </location>
</feature>
<feature type="compositionally biased region" description="Basic and acidic residues" evidence="5">
    <location>
        <begin position="127"/>
        <end position="138"/>
    </location>
</feature>
<feature type="compositionally biased region" description="Polar residues" evidence="5">
    <location>
        <begin position="226"/>
        <end position="238"/>
    </location>
</feature>
<feature type="disulfide bond" evidence="4">
    <location>
        <begin position="30"/>
        <end position="33"/>
    </location>
</feature>
<feature type="disulfide bond" evidence="4">
    <location>
        <begin position="41"/>
        <end position="45"/>
    </location>
</feature>
<feature type="disulfide bond" evidence="4">
    <location>
        <begin position="58"/>
        <end position="64"/>
    </location>
</feature>
<feature type="disulfide bond" evidence="4">
    <location>
        <begin position="72"/>
        <end position="85"/>
    </location>
</feature>
<feature type="disulfide bond" evidence="4">
    <location>
        <begin position="79"/>
        <end position="105"/>
    </location>
</feature>
<feature type="disulfide bond" evidence="3">
    <location>
        <begin position="160"/>
        <end position="188"/>
    </location>
</feature>
<feature type="disulfide bond" evidence="3">
    <location>
        <begin position="199"/>
        <end position="210"/>
    </location>
</feature>
<feature type="disulfide bond" evidence="3">
    <location>
        <begin position="212"/>
        <end position="232"/>
    </location>
</feature>
<feature type="sequence conflict" description="In Ref. 1; CAA57274." evidence="6" ref="1">
    <original>A</original>
    <variation>P</variation>
    <location>
        <position position="35"/>
    </location>
</feature>
<feature type="sequence conflict" description="In Ref. 1; CAA57274." evidence="6" ref="1">
    <original>A</original>
    <variation>T</variation>
    <location>
        <position position="93"/>
    </location>
</feature>
<gene>
    <name type="primary">Igfbp6</name>
    <name type="synonym">Igfbp-6</name>
</gene>
<sequence>MTWDGLPTQPLLMLLMLLFAAGSGSALAGCPGCGAGMQTGCRGGCVEEEDAGSPADGCTEAGGCLRREGQPCGVYSPKCAPGLQCQPRENEEAPLRALLIGQGRCQRARGPSEETTKESKPQGGASRSRDTNHRDRQKNPRTSAAPIRPNPVQDSEMGPCRRHLDSVLQQLQTEVFRGGARGLYVPNCDLRGFYRKQQCRSSQGNRRGPCWCVDPMGQPLPVSPDGQGSTQCSARSSG</sequence>